<organism>
    <name type="scientific">Bifidobacterium longum subsp. infantis (strain ATCC 15697 / DSM 20088 / JCM 1222 / NCTC 11817 / S12)</name>
    <dbReference type="NCBI Taxonomy" id="391904"/>
    <lineage>
        <taxon>Bacteria</taxon>
        <taxon>Bacillati</taxon>
        <taxon>Actinomycetota</taxon>
        <taxon>Actinomycetes</taxon>
        <taxon>Bifidobacteriales</taxon>
        <taxon>Bifidobacteriaceae</taxon>
        <taxon>Bifidobacterium</taxon>
    </lineage>
</organism>
<proteinExistence type="inferred from homology"/>
<keyword id="KW-0413">Isomerase</keyword>
<dbReference type="EC" id="5.3.1.6" evidence="1"/>
<dbReference type="EMBL" id="CP001095">
    <property type="protein sequence ID" value="ACJ53252.1"/>
    <property type="molecule type" value="Genomic_DNA"/>
</dbReference>
<dbReference type="EMBL" id="AP010889">
    <property type="protein sequence ID" value="BAJ69843.1"/>
    <property type="molecule type" value="Genomic_DNA"/>
</dbReference>
<dbReference type="RefSeq" id="WP_012578451.1">
    <property type="nucleotide sequence ID" value="NZ_JDTT01000049.1"/>
</dbReference>
<dbReference type="SMR" id="B7GN96"/>
<dbReference type="KEGG" id="bln:Blon_2191"/>
<dbReference type="KEGG" id="blon:BLIJ_2266"/>
<dbReference type="PATRIC" id="fig|391904.8.peg.2267"/>
<dbReference type="HOGENOM" id="CLU_056590_1_0_11"/>
<dbReference type="UniPathway" id="UPA00115">
    <property type="reaction ID" value="UER00412"/>
</dbReference>
<dbReference type="Proteomes" id="UP000001360">
    <property type="component" value="Chromosome"/>
</dbReference>
<dbReference type="GO" id="GO:0005829">
    <property type="term" value="C:cytosol"/>
    <property type="evidence" value="ECO:0007669"/>
    <property type="project" value="TreeGrafter"/>
</dbReference>
<dbReference type="GO" id="GO:0004751">
    <property type="term" value="F:ribose-5-phosphate isomerase activity"/>
    <property type="evidence" value="ECO:0007669"/>
    <property type="project" value="UniProtKB-UniRule"/>
</dbReference>
<dbReference type="GO" id="GO:0006014">
    <property type="term" value="P:D-ribose metabolic process"/>
    <property type="evidence" value="ECO:0007669"/>
    <property type="project" value="TreeGrafter"/>
</dbReference>
<dbReference type="GO" id="GO:0009052">
    <property type="term" value="P:pentose-phosphate shunt, non-oxidative branch"/>
    <property type="evidence" value="ECO:0007669"/>
    <property type="project" value="UniProtKB-UniRule"/>
</dbReference>
<dbReference type="CDD" id="cd01398">
    <property type="entry name" value="RPI_A"/>
    <property type="match status" value="1"/>
</dbReference>
<dbReference type="FunFam" id="3.40.50.1360:FF:000001">
    <property type="entry name" value="Ribose-5-phosphate isomerase A"/>
    <property type="match status" value="1"/>
</dbReference>
<dbReference type="Gene3D" id="3.30.70.260">
    <property type="match status" value="1"/>
</dbReference>
<dbReference type="Gene3D" id="3.40.50.1360">
    <property type="match status" value="1"/>
</dbReference>
<dbReference type="HAMAP" id="MF_00170">
    <property type="entry name" value="Rib_5P_isom_A"/>
    <property type="match status" value="1"/>
</dbReference>
<dbReference type="InterPro" id="IPR037171">
    <property type="entry name" value="NagB/RpiA_transferase-like"/>
</dbReference>
<dbReference type="InterPro" id="IPR020672">
    <property type="entry name" value="Ribose5P_isomerase_typA_subgr"/>
</dbReference>
<dbReference type="InterPro" id="IPR004788">
    <property type="entry name" value="Ribose5P_isomerase_type_A"/>
</dbReference>
<dbReference type="NCBIfam" id="NF001924">
    <property type="entry name" value="PRK00702.1"/>
    <property type="match status" value="1"/>
</dbReference>
<dbReference type="NCBIfam" id="TIGR00021">
    <property type="entry name" value="rpiA"/>
    <property type="match status" value="1"/>
</dbReference>
<dbReference type="PANTHER" id="PTHR11934">
    <property type="entry name" value="RIBOSE-5-PHOSPHATE ISOMERASE"/>
    <property type="match status" value="1"/>
</dbReference>
<dbReference type="PANTHER" id="PTHR11934:SF0">
    <property type="entry name" value="RIBOSE-5-PHOSPHATE ISOMERASE"/>
    <property type="match status" value="1"/>
</dbReference>
<dbReference type="Pfam" id="PF06026">
    <property type="entry name" value="Rib_5-P_isom_A"/>
    <property type="match status" value="1"/>
</dbReference>
<dbReference type="SUPFAM" id="SSF75445">
    <property type="entry name" value="D-ribose-5-phosphate isomerase (RpiA), lid domain"/>
    <property type="match status" value="1"/>
</dbReference>
<dbReference type="SUPFAM" id="SSF100950">
    <property type="entry name" value="NagB/RpiA/CoA transferase-like"/>
    <property type="match status" value="1"/>
</dbReference>
<protein>
    <recommendedName>
        <fullName evidence="1">Ribose-5-phosphate isomerase A</fullName>
        <ecNumber evidence="1">5.3.1.6</ecNumber>
    </recommendedName>
    <alternativeName>
        <fullName evidence="1">Phosphoriboisomerase A</fullName>
        <shortName evidence="1">PRI</shortName>
    </alternativeName>
</protein>
<evidence type="ECO:0000255" key="1">
    <source>
        <dbReference type="HAMAP-Rule" id="MF_00170"/>
    </source>
</evidence>
<reference key="1">
    <citation type="journal article" date="2008" name="Proc. Natl. Acad. Sci. U.S.A.">
        <title>The genome sequence of Bifidobacterium longum subsp. infantis reveals adaptations for milk utilization within the infant microbiome.</title>
        <authorList>
            <person name="Sela D.A."/>
            <person name="Chapman J."/>
            <person name="Adeuya A."/>
            <person name="Kim J.H."/>
            <person name="Chen F."/>
            <person name="Whitehead T.R."/>
            <person name="Lapidus A."/>
            <person name="Rokhsar D.S."/>
            <person name="Lebrilla C.B."/>
            <person name="German J.B."/>
            <person name="Price N.P."/>
            <person name="Richardson P.M."/>
            <person name="Mills D.A."/>
        </authorList>
    </citation>
    <scope>NUCLEOTIDE SEQUENCE [LARGE SCALE GENOMIC DNA]</scope>
    <source>
        <strain>ATCC 15697 / DSM 20088 / JCM 1222 / NCTC 11817 / S12</strain>
    </source>
</reference>
<reference key="2">
    <citation type="journal article" date="2011" name="Nature">
        <title>Bifidobacteria can protect from enteropathogenic infection through production of acetate.</title>
        <authorList>
            <person name="Fukuda S."/>
            <person name="Toh H."/>
            <person name="Hase K."/>
            <person name="Oshima K."/>
            <person name="Nakanishi Y."/>
            <person name="Yoshimura K."/>
            <person name="Tobe T."/>
            <person name="Clarke J.M."/>
            <person name="Topping D.L."/>
            <person name="Suzuki T."/>
            <person name="Taylor T.D."/>
            <person name="Itoh K."/>
            <person name="Kikuchi J."/>
            <person name="Morita H."/>
            <person name="Hattori M."/>
            <person name="Ohno H."/>
        </authorList>
    </citation>
    <scope>NUCLEOTIDE SEQUENCE [LARGE SCALE GENOMIC DNA]</scope>
    <source>
        <strain>ATCC 15697 / DSM 20088 / JCM 1222 / NCTC 11817 / S12</strain>
    </source>
</reference>
<gene>
    <name evidence="1" type="primary">rpiA</name>
    <name type="ordered locus">Blon_2191</name>
    <name type="ordered locus">BLIJ_2266</name>
</gene>
<name>RPIA_BIFLS</name>
<sequence>MDKAQQDALKKAAGIEAAKLVENGMIAGLGTGSTVKFLVDELGRRHQEEGLEFTGVTTSRRTQAQAESYGIKIVDIDDVDHIDVTIDGADEVDKNFNGIKGGGAALLWEKIVATNSNQIVWIVDESKVVDTIGKFPLPVEVIPFGAGHVIKKFEACGYKPVLRLDADGKEVRTDENNFVVDLHLERIDHPQELAEDLINTVGVVEHGLFLNMVDKVIVGDPNGPRVMTNANK</sequence>
<feature type="chain" id="PRO_1000194690" description="Ribose-5-phosphate isomerase A">
    <location>
        <begin position="1"/>
        <end position="232"/>
    </location>
</feature>
<feature type="active site" description="Proton acceptor" evidence="1">
    <location>
        <position position="109"/>
    </location>
</feature>
<feature type="binding site" evidence="1">
    <location>
        <begin position="31"/>
        <end position="34"/>
    </location>
    <ligand>
        <name>substrate</name>
    </ligand>
</feature>
<feature type="binding site" evidence="1">
    <location>
        <begin position="87"/>
        <end position="90"/>
    </location>
    <ligand>
        <name>substrate</name>
    </ligand>
</feature>
<feature type="binding site" evidence="1">
    <location>
        <begin position="100"/>
        <end position="103"/>
    </location>
    <ligand>
        <name>substrate</name>
    </ligand>
</feature>
<feature type="binding site" evidence="1">
    <location>
        <position position="127"/>
    </location>
    <ligand>
        <name>substrate</name>
    </ligand>
</feature>
<comment type="function">
    <text evidence="1">Catalyzes the reversible conversion of ribose-5-phosphate to ribulose 5-phosphate.</text>
</comment>
<comment type="catalytic activity">
    <reaction evidence="1">
        <text>aldehydo-D-ribose 5-phosphate = D-ribulose 5-phosphate</text>
        <dbReference type="Rhea" id="RHEA:14657"/>
        <dbReference type="ChEBI" id="CHEBI:58121"/>
        <dbReference type="ChEBI" id="CHEBI:58273"/>
        <dbReference type="EC" id="5.3.1.6"/>
    </reaction>
</comment>
<comment type="pathway">
    <text evidence="1">Carbohydrate degradation; pentose phosphate pathway; D-ribose 5-phosphate from D-ribulose 5-phosphate (non-oxidative stage): step 1/1.</text>
</comment>
<comment type="subunit">
    <text evidence="1">Homodimer.</text>
</comment>
<comment type="similarity">
    <text evidence="1">Belongs to the ribose 5-phosphate isomerase family.</text>
</comment>
<accession>B7GN96</accession>
<accession>E8MN40</accession>